<gene>
    <name type="ordered locus">Sputw3181_1720</name>
</gene>
<sequence>MSINIEQAIIHEISQDSQGQLRCRLRPQPLLNGQAVEVMLDELHQTYTSKAGKGFGYFGIHGDDGEANPAFANALTQYRAGELGFVEFSGQASKLLQEELAKYDFSQGGFLLMSCYTSITSDYLFVALLSAKSSMTVLDDMELSQNNHLDLNNIQLAARIDLSEWQADKDSRKYISFIRGRAGRKVADFFLDFMGCVEGVNTKAQNKTLMNAVEDFVASSDLTKDERQQCRNKVFEYCSERFDEGADIEIKDLADELADQGMDSFYDFARGGSYDLDEEFPADKSTLRQLKKFSGTGGGVTLSFDGGHLGQRVIYDPISDTILIKGVPANLKDQLDRRLKGE</sequence>
<reference key="1">
    <citation type="submission" date="2006-12" db="EMBL/GenBank/DDBJ databases">
        <title>Complete sequence of Shewanella sp. W3-18-1.</title>
        <authorList>
            <consortium name="US DOE Joint Genome Institute"/>
            <person name="Copeland A."/>
            <person name="Lucas S."/>
            <person name="Lapidus A."/>
            <person name="Barry K."/>
            <person name="Detter J.C."/>
            <person name="Glavina del Rio T."/>
            <person name="Hammon N."/>
            <person name="Israni S."/>
            <person name="Dalin E."/>
            <person name="Tice H."/>
            <person name="Pitluck S."/>
            <person name="Chain P."/>
            <person name="Malfatti S."/>
            <person name="Shin M."/>
            <person name="Vergez L."/>
            <person name="Schmutz J."/>
            <person name="Larimer F."/>
            <person name="Land M."/>
            <person name="Hauser L."/>
            <person name="Kyrpides N."/>
            <person name="Lykidis A."/>
            <person name="Tiedje J."/>
            <person name="Richardson P."/>
        </authorList>
    </citation>
    <scope>NUCLEOTIDE SEQUENCE [LARGE SCALE GENOMIC DNA]</scope>
    <source>
        <strain>W3-18-1</strain>
    </source>
</reference>
<accession>A1RIR2</accession>
<protein>
    <recommendedName>
        <fullName evidence="1">Nucleoid-associated protein Sputw3181_1720</fullName>
    </recommendedName>
</protein>
<organism>
    <name type="scientific">Shewanella sp. (strain W3-18-1)</name>
    <dbReference type="NCBI Taxonomy" id="351745"/>
    <lineage>
        <taxon>Bacteria</taxon>
        <taxon>Pseudomonadati</taxon>
        <taxon>Pseudomonadota</taxon>
        <taxon>Gammaproteobacteria</taxon>
        <taxon>Alteromonadales</taxon>
        <taxon>Shewanellaceae</taxon>
        <taxon>Shewanella</taxon>
    </lineage>
</organism>
<keyword id="KW-0963">Cytoplasm</keyword>
<proteinExistence type="inferred from homology"/>
<dbReference type="EMBL" id="CP000503">
    <property type="protein sequence ID" value="ABM24557.1"/>
    <property type="molecule type" value="Genomic_DNA"/>
</dbReference>
<dbReference type="SMR" id="A1RIR2"/>
<dbReference type="KEGG" id="shw:Sputw3181_1720"/>
<dbReference type="HOGENOM" id="CLU_063050_0_1_6"/>
<dbReference type="Proteomes" id="UP000002597">
    <property type="component" value="Chromosome"/>
</dbReference>
<dbReference type="GO" id="GO:0043590">
    <property type="term" value="C:bacterial nucleoid"/>
    <property type="evidence" value="ECO:0007669"/>
    <property type="project" value="TreeGrafter"/>
</dbReference>
<dbReference type="GO" id="GO:0005737">
    <property type="term" value="C:cytoplasm"/>
    <property type="evidence" value="ECO:0007669"/>
    <property type="project" value="UniProtKB-UniRule"/>
</dbReference>
<dbReference type="GO" id="GO:0003690">
    <property type="term" value="F:double-stranded DNA binding"/>
    <property type="evidence" value="ECO:0007669"/>
    <property type="project" value="TreeGrafter"/>
</dbReference>
<dbReference type="GO" id="GO:0003727">
    <property type="term" value="F:single-stranded RNA binding"/>
    <property type="evidence" value="ECO:0007669"/>
    <property type="project" value="TreeGrafter"/>
</dbReference>
<dbReference type="HAMAP" id="MF_00730">
    <property type="entry name" value="NdpA"/>
    <property type="match status" value="1"/>
</dbReference>
<dbReference type="InterPro" id="IPR007358">
    <property type="entry name" value="Nucleoid_associated_NdpA"/>
</dbReference>
<dbReference type="NCBIfam" id="NF001557">
    <property type="entry name" value="PRK00378.1"/>
    <property type="match status" value="1"/>
</dbReference>
<dbReference type="PANTHER" id="PTHR38772">
    <property type="match status" value="1"/>
</dbReference>
<dbReference type="PANTHER" id="PTHR38772:SF1">
    <property type="entry name" value="NUCLEOID-ASSOCIATED PROTEIN YEJK"/>
    <property type="match status" value="1"/>
</dbReference>
<dbReference type="Pfam" id="PF04245">
    <property type="entry name" value="NA37"/>
    <property type="match status" value="1"/>
</dbReference>
<feature type="chain" id="PRO_1000045950" description="Nucleoid-associated protein Sputw3181_1720">
    <location>
        <begin position="1"/>
        <end position="342"/>
    </location>
</feature>
<comment type="subcellular location">
    <subcellularLocation>
        <location evidence="1">Cytoplasm</location>
        <location evidence="1">Nucleoid</location>
    </subcellularLocation>
</comment>
<comment type="similarity">
    <text evidence="1">Belongs to the YejK family.</text>
</comment>
<evidence type="ECO:0000255" key="1">
    <source>
        <dbReference type="HAMAP-Rule" id="MF_00730"/>
    </source>
</evidence>
<name>NDPA_SHESW</name>